<sequence>MITDVWKYRGKSTGELRSSVCYAIKTGVFDYAKQFPSSRNLEKFGEARQDLTIKELAEKFLALKETEVAKTSLNTYRAVIKNILSIIGEKNLASSINKEKLLEVRKELLTGYQIPKSNYIVTQPGRSAVTVNNYMTNLNAVFQFGVDNGYLADNPFKGISPLKESRTIPDPLSREEFIRLIDACRNQQAKNLWCVSVYTGVRPGELCALGWEDIDLKNGTMMIRRNLAKDRFTVPKTQAGTNRVIHLIKPAIDALRSQMTLTRLSKEHIIDVHFREYGRTEKQKCTFVFQPEVSARVKNYGDHFTVDSIRQMWDAAIKRAGLRHRKSYQSRHTYACWSLTAGANPAFIANQMGHADAQMVFQVYGKWMSENNNAQVALLNTQLSEFAPTMPHNEAMKN</sequence>
<accession>P76168</accession>
<accession>Q2MB81</accession>
<reference key="1">
    <citation type="journal article" date="1997" name="Science">
        <title>The complete genome sequence of Escherichia coli K-12.</title>
        <authorList>
            <person name="Blattner F.R."/>
            <person name="Plunkett G. III"/>
            <person name="Bloch C.A."/>
            <person name="Perna N.T."/>
            <person name="Burland V."/>
            <person name="Riley M."/>
            <person name="Collado-Vides J."/>
            <person name="Glasner J.D."/>
            <person name="Rode C.K."/>
            <person name="Mayhew G.F."/>
            <person name="Gregor J."/>
            <person name="Davis N.W."/>
            <person name="Kirkpatrick H.A."/>
            <person name="Goeden M.A."/>
            <person name="Rose D.J."/>
            <person name="Mau B."/>
            <person name="Shao Y."/>
        </authorList>
    </citation>
    <scope>NUCLEOTIDE SEQUENCE [LARGE SCALE GENOMIC DNA]</scope>
    <source>
        <strain>K12 / MG1655 / ATCC 47076</strain>
    </source>
</reference>
<reference key="2">
    <citation type="journal article" date="2006" name="Mol. Syst. Biol.">
        <title>Highly accurate genome sequences of Escherichia coli K-12 strains MG1655 and W3110.</title>
        <authorList>
            <person name="Hayashi K."/>
            <person name="Morooka N."/>
            <person name="Yamamoto Y."/>
            <person name="Fujita K."/>
            <person name="Isono K."/>
            <person name="Choi S."/>
            <person name="Ohtsubo E."/>
            <person name="Baba T."/>
            <person name="Wanner B.L."/>
            <person name="Mori H."/>
            <person name="Horiuchi T."/>
        </authorList>
    </citation>
    <scope>NUCLEOTIDE SEQUENCE [LARGE SCALE GENOMIC DNA]</scope>
    <source>
        <strain>K12 / W3110 / ATCC 27325 / DSM 5911</strain>
    </source>
</reference>
<feature type="chain" id="PRO_0000197516" description="Putative defective protein IntQ">
    <location>
        <begin position="1"/>
        <end position="398"/>
    </location>
</feature>
<feature type="domain" description="Core-binding (CB)" evidence="3">
    <location>
        <begin position="51"/>
        <end position="146"/>
    </location>
</feature>
<feature type="domain" description="Tyr recombinase" evidence="2">
    <location>
        <begin position="167"/>
        <end position="378"/>
    </location>
</feature>
<feature type="active site" evidence="2">
    <location>
        <position position="202"/>
    </location>
</feature>
<feature type="active site" evidence="2">
    <location>
        <position position="236"/>
    </location>
</feature>
<feature type="active site" evidence="2">
    <location>
        <position position="331"/>
    </location>
</feature>
<feature type="active site" evidence="2">
    <location>
        <position position="354"/>
    </location>
</feature>
<feature type="active site" description="O-(3'-phospho-DNA)-tyrosine intermediate" evidence="2">
    <location>
        <position position="364"/>
    </location>
</feature>
<feature type="sequence conflict" description="In Ref. 2; BAE76475." evidence="4" ref="2">
    <original>F</original>
    <variation>L</variation>
    <location>
        <position position="274"/>
    </location>
</feature>
<comment type="function">
    <text evidence="1">Integrase is necessary for integration of the phage into the host genome by site-specific recombination. In conjunction with excisionase, integrase is also necessary for excision of the prophage from the host genome (By similarity).</text>
</comment>
<comment type="interaction">
    <interactant intactId="EBI-559711">
        <id>P76168</id>
    </interactant>
    <interactant intactId="EBI-559703">
        <id>P04994</id>
        <label>xseA</label>
    </interactant>
    <organismsDiffer>false</organismsDiffer>
    <experiments>3</experiments>
</comment>
<comment type="similarity">
    <text evidence="4">Belongs to the 'phage' integrase family.</text>
</comment>
<comment type="caution">
    <text evidence="4">May not be functional, the original sequence is interrupted by an IS2 element.</text>
</comment>
<protein>
    <recommendedName>
        <fullName evidence="4">Putative defective protein IntQ</fullName>
    </recommendedName>
    <alternativeName>
        <fullName>Putative lambdoid prophage Qin defective integrase</fullName>
    </alternativeName>
</protein>
<keyword id="KW-0229">DNA integration</keyword>
<keyword id="KW-0233">DNA recombination</keyword>
<keyword id="KW-0238">DNA-binding</keyword>
<keyword id="KW-1185">Reference proteome</keyword>
<keyword id="KW-1179">Viral genome integration</keyword>
<keyword id="KW-1160">Virus entry into host cell</keyword>
<gene>
    <name type="primary">intQ</name>
    <name type="ordered locus">b1579</name>
    <name type="ordered locus">JW1571</name>
</gene>
<dbReference type="EMBL" id="U00096">
    <property type="status" value="NOT_ANNOTATED_CDS"/>
    <property type="molecule type" value="Genomic_DNA"/>
</dbReference>
<dbReference type="EMBL" id="AP009048">
    <property type="protein sequence ID" value="BAE76475.1"/>
    <property type="molecule type" value="Genomic_DNA"/>
</dbReference>
<dbReference type="PIR" id="E64913">
    <property type="entry name" value="E64913"/>
</dbReference>
<dbReference type="SMR" id="P76168"/>
<dbReference type="BioGRID" id="4260817">
    <property type="interactions" value="27"/>
</dbReference>
<dbReference type="DIP" id="DIP-10039N"/>
<dbReference type="FunCoup" id="P76168">
    <property type="interactions" value="59"/>
</dbReference>
<dbReference type="IntAct" id="P76168">
    <property type="interactions" value="6"/>
</dbReference>
<dbReference type="KEGG" id="ecj:JW1571"/>
<dbReference type="eggNOG" id="COG0582">
    <property type="taxonomic scope" value="Bacteria"/>
</dbReference>
<dbReference type="HOGENOM" id="CLU_027562_8_1_6"/>
<dbReference type="InParanoid" id="P76168"/>
<dbReference type="Proteomes" id="UP000000625">
    <property type="component" value="Chromosome"/>
</dbReference>
<dbReference type="GO" id="GO:0003677">
    <property type="term" value="F:DNA binding"/>
    <property type="evidence" value="ECO:0007669"/>
    <property type="project" value="UniProtKB-KW"/>
</dbReference>
<dbReference type="GO" id="GO:0009009">
    <property type="term" value="F:site-specific recombinase activity"/>
    <property type="evidence" value="ECO:0000318"/>
    <property type="project" value="GO_Central"/>
</dbReference>
<dbReference type="GO" id="GO:0007059">
    <property type="term" value="P:chromosome segregation"/>
    <property type="evidence" value="ECO:0000318"/>
    <property type="project" value="GO_Central"/>
</dbReference>
<dbReference type="GO" id="GO:0006310">
    <property type="term" value="P:DNA recombination"/>
    <property type="evidence" value="ECO:0000318"/>
    <property type="project" value="GO_Central"/>
</dbReference>
<dbReference type="GO" id="GO:0075713">
    <property type="term" value="P:establishment of integrated proviral latency"/>
    <property type="evidence" value="ECO:0007669"/>
    <property type="project" value="UniProtKB-KW"/>
</dbReference>
<dbReference type="GO" id="GO:0046718">
    <property type="term" value="P:symbiont entry into host cell"/>
    <property type="evidence" value="ECO:0007669"/>
    <property type="project" value="UniProtKB-KW"/>
</dbReference>
<dbReference type="GO" id="GO:0044826">
    <property type="term" value="P:viral genome integration into host DNA"/>
    <property type="evidence" value="ECO:0007669"/>
    <property type="project" value="UniProtKB-KW"/>
</dbReference>
<dbReference type="CDD" id="cd01189">
    <property type="entry name" value="INT_ICEBs1_C_like"/>
    <property type="match status" value="1"/>
</dbReference>
<dbReference type="Gene3D" id="1.10.150.130">
    <property type="match status" value="1"/>
</dbReference>
<dbReference type="Gene3D" id="1.10.443.10">
    <property type="entry name" value="Intergrase catalytic core"/>
    <property type="match status" value="1"/>
</dbReference>
<dbReference type="InterPro" id="IPR044068">
    <property type="entry name" value="CB"/>
</dbReference>
<dbReference type="InterPro" id="IPR011010">
    <property type="entry name" value="DNA_brk_join_enz"/>
</dbReference>
<dbReference type="InterPro" id="IPR013762">
    <property type="entry name" value="Integrase-like_cat_sf"/>
</dbReference>
<dbReference type="InterPro" id="IPR002104">
    <property type="entry name" value="Integrase_catalytic"/>
</dbReference>
<dbReference type="InterPro" id="IPR010998">
    <property type="entry name" value="Integrase_recombinase_N"/>
</dbReference>
<dbReference type="InterPro" id="IPR022000">
    <property type="entry name" value="Min27-like_integrase_DNA_bind"/>
</dbReference>
<dbReference type="InterPro" id="IPR050090">
    <property type="entry name" value="Tyrosine_recombinase_XerCD"/>
</dbReference>
<dbReference type="PANTHER" id="PTHR30349">
    <property type="entry name" value="PHAGE INTEGRASE-RELATED"/>
    <property type="match status" value="1"/>
</dbReference>
<dbReference type="PANTHER" id="PTHR30349:SF36">
    <property type="entry name" value="PROPHAGE INTEGRASE INTR-RELATED"/>
    <property type="match status" value="1"/>
</dbReference>
<dbReference type="Pfam" id="PF12167">
    <property type="entry name" value="Arm-DNA-bind_2"/>
    <property type="match status" value="1"/>
</dbReference>
<dbReference type="Pfam" id="PF00589">
    <property type="entry name" value="Phage_integrase"/>
    <property type="match status" value="1"/>
</dbReference>
<dbReference type="SUPFAM" id="SSF56349">
    <property type="entry name" value="DNA breaking-rejoining enzymes"/>
    <property type="match status" value="1"/>
</dbReference>
<dbReference type="PROSITE" id="PS51900">
    <property type="entry name" value="CB"/>
    <property type="match status" value="1"/>
</dbReference>
<dbReference type="PROSITE" id="PS51898">
    <property type="entry name" value="TYR_RECOMBINASE"/>
    <property type="match status" value="1"/>
</dbReference>
<proteinExistence type="evidence at protein level"/>
<name>INTQ_ECOLI</name>
<organism>
    <name type="scientific">Escherichia coli (strain K12)</name>
    <dbReference type="NCBI Taxonomy" id="83333"/>
    <lineage>
        <taxon>Bacteria</taxon>
        <taxon>Pseudomonadati</taxon>
        <taxon>Pseudomonadota</taxon>
        <taxon>Gammaproteobacteria</taxon>
        <taxon>Enterobacterales</taxon>
        <taxon>Enterobacteriaceae</taxon>
        <taxon>Escherichia</taxon>
    </lineage>
</organism>
<evidence type="ECO:0000250" key="1"/>
<evidence type="ECO:0000255" key="2">
    <source>
        <dbReference type="PROSITE-ProRule" id="PRU01246"/>
    </source>
</evidence>
<evidence type="ECO:0000255" key="3">
    <source>
        <dbReference type="PROSITE-ProRule" id="PRU01248"/>
    </source>
</evidence>
<evidence type="ECO:0000305" key="4"/>